<comment type="function">
    <text evidence="1">Catalyzes the phosphorylation of the 3'-hydroxyl group of dephosphocoenzyme A to form coenzyme A.</text>
</comment>
<comment type="catalytic activity">
    <reaction evidence="1">
        <text>3'-dephospho-CoA + ATP = ADP + CoA + H(+)</text>
        <dbReference type="Rhea" id="RHEA:18245"/>
        <dbReference type="ChEBI" id="CHEBI:15378"/>
        <dbReference type="ChEBI" id="CHEBI:30616"/>
        <dbReference type="ChEBI" id="CHEBI:57287"/>
        <dbReference type="ChEBI" id="CHEBI:57328"/>
        <dbReference type="ChEBI" id="CHEBI:456216"/>
        <dbReference type="EC" id="2.7.1.24"/>
    </reaction>
</comment>
<comment type="pathway">
    <text evidence="1">Cofactor biosynthesis; coenzyme A biosynthesis; CoA from (R)-pantothenate: step 5/5.</text>
</comment>
<comment type="subcellular location">
    <subcellularLocation>
        <location evidence="1">Cytoplasm</location>
    </subcellularLocation>
</comment>
<comment type="similarity">
    <text evidence="1 2">Belongs to the CoaE family.</text>
</comment>
<comment type="sequence caution" evidence="2">
    <conflict type="erroneous initiation">
        <sequence resource="EMBL-CDS" id="AAF95570"/>
    </conflict>
</comment>
<accession>Q9KPE3</accession>
<accession>Q9X4H0</accession>
<protein>
    <recommendedName>
        <fullName evidence="1">Dephospho-CoA kinase</fullName>
        <ecNumber evidence="1">2.7.1.24</ecNumber>
    </recommendedName>
    <alternativeName>
        <fullName evidence="1">Dephosphocoenzyme A kinase</fullName>
    </alternativeName>
</protein>
<reference key="1">
    <citation type="journal article" date="1999" name="Infect. Immun.">
        <title>Genetic characterization of a new type IV-A pilus gene cluster found in both classical and El Tor biotypes of Vibrio cholerae.</title>
        <authorList>
            <person name="Fullner K.J."/>
            <person name="Mekalanos J.J."/>
        </authorList>
    </citation>
    <scope>NUCLEOTIDE SEQUENCE [GENOMIC DNA]</scope>
    <source>
        <strain>ATCC 39315 / El Tor Inaba N16961</strain>
    </source>
</reference>
<reference key="2">
    <citation type="journal article" date="2000" name="Nature">
        <title>DNA sequence of both chromosomes of the cholera pathogen Vibrio cholerae.</title>
        <authorList>
            <person name="Heidelberg J.F."/>
            <person name="Eisen J.A."/>
            <person name="Nelson W.C."/>
            <person name="Clayton R.A."/>
            <person name="Gwinn M.L."/>
            <person name="Dodson R.J."/>
            <person name="Haft D.H."/>
            <person name="Hickey E.K."/>
            <person name="Peterson J.D."/>
            <person name="Umayam L.A."/>
            <person name="Gill S.R."/>
            <person name="Nelson K.E."/>
            <person name="Read T.D."/>
            <person name="Tettelin H."/>
            <person name="Richardson D.L."/>
            <person name="Ermolaeva M.D."/>
            <person name="Vamathevan J.J."/>
            <person name="Bass S."/>
            <person name="Qin H."/>
            <person name="Dragoi I."/>
            <person name="Sellers P."/>
            <person name="McDonald L.A."/>
            <person name="Utterback T.R."/>
            <person name="Fleischmann R.D."/>
            <person name="Nierman W.C."/>
            <person name="White O."/>
            <person name="Salzberg S.L."/>
            <person name="Smith H.O."/>
            <person name="Colwell R.R."/>
            <person name="Mekalanos J.J."/>
            <person name="Venter J.C."/>
            <person name="Fraser C.M."/>
        </authorList>
    </citation>
    <scope>NUCLEOTIDE SEQUENCE [LARGE SCALE GENOMIC DNA]</scope>
    <source>
        <strain>ATCC 39315 / El Tor Inaba N16961</strain>
    </source>
</reference>
<organism>
    <name type="scientific">Vibrio cholerae serotype O1 (strain ATCC 39315 / El Tor Inaba N16961)</name>
    <dbReference type="NCBI Taxonomy" id="243277"/>
    <lineage>
        <taxon>Bacteria</taxon>
        <taxon>Pseudomonadati</taxon>
        <taxon>Pseudomonadota</taxon>
        <taxon>Gammaproteobacteria</taxon>
        <taxon>Vibrionales</taxon>
        <taxon>Vibrionaceae</taxon>
        <taxon>Vibrio</taxon>
    </lineage>
</organism>
<keyword id="KW-0067">ATP-binding</keyword>
<keyword id="KW-0173">Coenzyme A biosynthesis</keyword>
<keyword id="KW-0963">Cytoplasm</keyword>
<keyword id="KW-0418">Kinase</keyword>
<keyword id="KW-0547">Nucleotide-binding</keyword>
<keyword id="KW-1185">Reference proteome</keyword>
<keyword id="KW-0808">Transferase</keyword>
<sequence length="202" mass="22307">MSFVVALTGGIASGKTTVANLFHDQFGIDLVDADVIARDVVKPETEGLKAIAAHFGQAILHPDGSLNRAALRERIFAAPNEKAWLNQLLHPMIRQGMRNALTQTTSPYALLIVPLLVENQLQTMADRVLVVDVDEKIQIERTMARDKVSREQAEAILAAQASRAQRLAIADDVLKNDAENQKLLPQITLLHQKYLAMSRQNL</sequence>
<dbReference type="EC" id="2.7.1.24" evidence="1"/>
<dbReference type="EMBL" id="AF109904">
    <property type="protein sequence ID" value="AAD21033.1"/>
    <property type="molecule type" value="Genomic_DNA"/>
</dbReference>
<dbReference type="EMBL" id="AE003852">
    <property type="protein sequence ID" value="AAF95570.1"/>
    <property type="status" value="ALT_INIT"/>
    <property type="molecule type" value="Genomic_DNA"/>
</dbReference>
<dbReference type="PIR" id="C82078">
    <property type="entry name" value="C82078"/>
</dbReference>
<dbReference type="RefSeq" id="NP_232057.1">
    <property type="nucleotide sequence ID" value="NC_002505.1"/>
</dbReference>
<dbReference type="RefSeq" id="WP_000011557.1">
    <property type="nucleotide sequence ID" value="NZ_LT906614.1"/>
</dbReference>
<dbReference type="SMR" id="Q9KPE3"/>
<dbReference type="STRING" id="243277.VC_2427"/>
<dbReference type="DNASU" id="2612969"/>
<dbReference type="EnsemblBacteria" id="AAF95570">
    <property type="protein sequence ID" value="AAF95570"/>
    <property type="gene ID" value="VC_2427"/>
</dbReference>
<dbReference type="GeneID" id="69718966"/>
<dbReference type="KEGG" id="vch:VC_2427"/>
<dbReference type="PATRIC" id="fig|243277.26.peg.2310"/>
<dbReference type="eggNOG" id="COG0237">
    <property type="taxonomic scope" value="Bacteria"/>
</dbReference>
<dbReference type="HOGENOM" id="CLU_057180_1_2_6"/>
<dbReference type="UniPathway" id="UPA00241">
    <property type="reaction ID" value="UER00356"/>
</dbReference>
<dbReference type="Proteomes" id="UP000000584">
    <property type="component" value="Chromosome 1"/>
</dbReference>
<dbReference type="GO" id="GO:0005737">
    <property type="term" value="C:cytoplasm"/>
    <property type="evidence" value="ECO:0007669"/>
    <property type="project" value="UniProtKB-SubCell"/>
</dbReference>
<dbReference type="GO" id="GO:0005524">
    <property type="term" value="F:ATP binding"/>
    <property type="evidence" value="ECO:0007669"/>
    <property type="project" value="UniProtKB-UniRule"/>
</dbReference>
<dbReference type="GO" id="GO:0004140">
    <property type="term" value="F:dephospho-CoA kinase activity"/>
    <property type="evidence" value="ECO:0000318"/>
    <property type="project" value="GO_Central"/>
</dbReference>
<dbReference type="GO" id="GO:0015937">
    <property type="term" value="P:coenzyme A biosynthetic process"/>
    <property type="evidence" value="ECO:0000318"/>
    <property type="project" value="GO_Central"/>
</dbReference>
<dbReference type="CDD" id="cd02022">
    <property type="entry name" value="DPCK"/>
    <property type="match status" value="1"/>
</dbReference>
<dbReference type="FunFam" id="3.40.50.300:FF:000518">
    <property type="entry name" value="Dephospho-CoA kinase"/>
    <property type="match status" value="1"/>
</dbReference>
<dbReference type="Gene3D" id="3.40.50.300">
    <property type="entry name" value="P-loop containing nucleotide triphosphate hydrolases"/>
    <property type="match status" value="1"/>
</dbReference>
<dbReference type="HAMAP" id="MF_00376">
    <property type="entry name" value="Dephospho_CoA_kinase"/>
    <property type="match status" value="1"/>
</dbReference>
<dbReference type="InterPro" id="IPR001977">
    <property type="entry name" value="Depp_CoAkinase"/>
</dbReference>
<dbReference type="InterPro" id="IPR027417">
    <property type="entry name" value="P-loop_NTPase"/>
</dbReference>
<dbReference type="NCBIfam" id="TIGR00152">
    <property type="entry name" value="dephospho-CoA kinase"/>
    <property type="match status" value="1"/>
</dbReference>
<dbReference type="PANTHER" id="PTHR10695:SF46">
    <property type="entry name" value="BIFUNCTIONAL COENZYME A SYNTHASE-RELATED"/>
    <property type="match status" value="1"/>
</dbReference>
<dbReference type="PANTHER" id="PTHR10695">
    <property type="entry name" value="DEPHOSPHO-COA KINASE-RELATED"/>
    <property type="match status" value="1"/>
</dbReference>
<dbReference type="Pfam" id="PF01121">
    <property type="entry name" value="CoaE"/>
    <property type="match status" value="1"/>
</dbReference>
<dbReference type="SUPFAM" id="SSF52540">
    <property type="entry name" value="P-loop containing nucleoside triphosphate hydrolases"/>
    <property type="match status" value="1"/>
</dbReference>
<dbReference type="PROSITE" id="PS51219">
    <property type="entry name" value="DPCK"/>
    <property type="match status" value="1"/>
</dbReference>
<proteinExistence type="inferred from homology"/>
<evidence type="ECO:0000255" key="1">
    <source>
        <dbReference type="HAMAP-Rule" id="MF_00376"/>
    </source>
</evidence>
<evidence type="ECO:0000305" key="2"/>
<name>COAE_VIBCH</name>
<gene>
    <name evidence="1" type="primary">coaE</name>
    <name type="ordered locus">VC_2427</name>
</gene>
<feature type="chain" id="PRO_0000173027" description="Dephospho-CoA kinase">
    <location>
        <begin position="1"/>
        <end position="202"/>
    </location>
</feature>
<feature type="domain" description="DPCK" evidence="1">
    <location>
        <begin position="4"/>
        <end position="201"/>
    </location>
</feature>
<feature type="binding site" evidence="1">
    <location>
        <begin position="12"/>
        <end position="17"/>
    </location>
    <ligand>
        <name>ATP</name>
        <dbReference type="ChEBI" id="CHEBI:30616"/>
    </ligand>
</feature>
<feature type="sequence conflict" description="In Ref. 1; AAD21033." evidence="2" ref="1">
    <original>R</original>
    <variation>C</variation>
    <location>
        <position position="72"/>
    </location>
</feature>